<feature type="chain" id="PRO_1000075445" description="Phosphomethylpyrimidine synthase">
    <location>
        <begin position="1"/>
        <end position="662"/>
    </location>
</feature>
<feature type="binding site" evidence="1">
    <location>
        <position position="235"/>
    </location>
    <ligand>
        <name>substrate</name>
    </ligand>
</feature>
<feature type="binding site" evidence="1">
    <location>
        <position position="264"/>
    </location>
    <ligand>
        <name>substrate</name>
    </ligand>
</feature>
<feature type="binding site" evidence="1">
    <location>
        <position position="293"/>
    </location>
    <ligand>
        <name>substrate</name>
    </ligand>
</feature>
<feature type="binding site" evidence="1">
    <location>
        <position position="329"/>
    </location>
    <ligand>
        <name>substrate</name>
    </ligand>
</feature>
<feature type="binding site" evidence="1">
    <location>
        <begin position="349"/>
        <end position="351"/>
    </location>
    <ligand>
        <name>substrate</name>
    </ligand>
</feature>
<feature type="binding site" evidence="1">
    <location>
        <begin position="390"/>
        <end position="393"/>
    </location>
    <ligand>
        <name>substrate</name>
    </ligand>
</feature>
<feature type="binding site" evidence="1">
    <location>
        <position position="429"/>
    </location>
    <ligand>
        <name>substrate</name>
    </ligand>
</feature>
<feature type="binding site" evidence="1">
    <location>
        <position position="433"/>
    </location>
    <ligand>
        <name>Zn(2+)</name>
        <dbReference type="ChEBI" id="CHEBI:29105"/>
    </ligand>
</feature>
<feature type="binding site" evidence="1">
    <location>
        <position position="456"/>
    </location>
    <ligand>
        <name>substrate</name>
    </ligand>
</feature>
<feature type="binding site" evidence="1">
    <location>
        <position position="497"/>
    </location>
    <ligand>
        <name>Zn(2+)</name>
        <dbReference type="ChEBI" id="CHEBI:29105"/>
    </ligand>
</feature>
<feature type="binding site" evidence="1">
    <location>
        <position position="577"/>
    </location>
    <ligand>
        <name>[4Fe-4S] cluster</name>
        <dbReference type="ChEBI" id="CHEBI:49883"/>
        <note>4Fe-4S-S-AdoMet</note>
    </ligand>
</feature>
<feature type="binding site" evidence="1">
    <location>
        <position position="580"/>
    </location>
    <ligand>
        <name>[4Fe-4S] cluster</name>
        <dbReference type="ChEBI" id="CHEBI:49883"/>
        <note>4Fe-4S-S-AdoMet</note>
    </ligand>
</feature>
<feature type="binding site" evidence="1">
    <location>
        <position position="585"/>
    </location>
    <ligand>
        <name>[4Fe-4S] cluster</name>
        <dbReference type="ChEBI" id="CHEBI:49883"/>
        <note>4Fe-4S-S-AdoMet</note>
    </ligand>
</feature>
<accession>B0TRP7</accession>
<keyword id="KW-0004">4Fe-4S</keyword>
<keyword id="KW-0408">Iron</keyword>
<keyword id="KW-0411">Iron-sulfur</keyword>
<keyword id="KW-0456">Lyase</keyword>
<keyword id="KW-0479">Metal-binding</keyword>
<keyword id="KW-0949">S-adenosyl-L-methionine</keyword>
<keyword id="KW-0784">Thiamine biosynthesis</keyword>
<keyword id="KW-0862">Zinc</keyword>
<name>THIC_SHEHH</name>
<protein>
    <recommendedName>
        <fullName evidence="1">Phosphomethylpyrimidine synthase</fullName>
        <ecNumber evidence="1">4.1.99.17</ecNumber>
    </recommendedName>
    <alternativeName>
        <fullName evidence="1">Hydroxymethylpyrimidine phosphate synthase</fullName>
        <shortName evidence="1">HMP-P synthase</shortName>
        <shortName evidence="1">HMP-phosphate synthase</shortName>
        <shortName evidence="1">HMPP synthase</shortName>
    </alternativeName>
    <alternativeName>
        <fullName evidence="1">Thiamine biosynthesis protein ThiC</fullName>
    </alternativeName>
</protein>
<comment type="function">
    <text evidence="1">Catalyzes the synthesis of the hydroxymethylpyrimidine phosphate (HMP-P) moiety of thiamine from aminoimidazole ribotide (AIR) in a radical S-adenosyl-L-methionine (SAM)-dependent reaction.</text>
</comment>
<comment type="catalytic activity">
    <reaction evidence="1">
        <text>5-amino-1-(5-phospho-beta-D-ribosyl)imidazole + S-adenosyl-L-methionine = 4-amino-2-methyl-5-(phosphooxymethyl)pyrimidine + CO + 5'-deoxyadenosine + formate + L-methionine + 3 H(+)</text>
        <dbReference type="Rhea" id="RHEA:24840"/>
        <dbReference type="ChEBI" id="CHEBI:15378"/>
        <dbReference type="ChEBI" id="CHEBI:15740"/>
        <dbReference type="ChEBI" id="CHEBI:17245"/>
        <dbReference type="ChEBI" id="CHEBI:17319"/>
        <dbReference type="ChEBI" id="CHEBI:57844"/>
        <dbReference type="ChEBI" id="CHEBI:58354"/>
        <dbReference type="ChEBI" id="CHEBI:59789"/>
        <dbReference type="ChEBI" id="CHEBI:137981"/>
        <dbReference type="EC" id="4.1.99.17"/>
    </reaction>
</comment>
<comment type="cofactor">
    <cofactor evidence="1">
        <name>[4Fe-4S] cluster</name>
        <dbReference type="ChEBI" id="CHEBI:49883"/>
    </cofactor>
    <text evidence="1">Binds 1 [4Fe-4S] cluster per subunit. The cluster is coordinated with 3 cysteines and an exchangeable S-adenosyl-L-methionine.</text>
</comment>
<comment type="pathway">
    <text evidence="1">Cofactor biosynthesis; thiamine diphosphate biosynthesis.</text>
</comment>
<comment type="subunit">
    <text evidence="1">Homodimer.</text>
</comment>
<comment type="similarity">
    <text evidence="1">Belongs to the ThiC family.</text>
</comment>
<sequence>MSNRRETRAQAQQFIDNLKPLQHPNSEKIYLQGSRADLKVGMRQIHQADTLIGGNETNPVFEANPPLKVYDCAGAYSDPDANIDVRKGLEKFREHWIEERGDTEQLAGVSSGFTQQRLADDGLDHLRFESLLPPRRAKTAKRVTQLHYARQGIITPEMEYIAIRENMALAEVNDPILTQKDKGESFGAVIGEPITPEFVRQEVARGRAIIPLNINHPEAEPMIIGRNFLVKVNANIGNSAVTSSIEEEVEKLVWSTRWGADTVMDLSTGRYIHETREWIIRNSPVPIGTVPIYQALEKVNGIAEDLNWETFRDTLIEQAEQGVDYFTIHAGVLLRYVPMTAKRLTGIVSRGGSIMAKWCLSHHKENFLYEHFRDICEICAAYDVSLSLGDGMRPGSIADANDEAQFSELTTLGELVKIAWQYDVQTIIEGPGHIPMNLIKENMDKQLELCDEAPFYTLGPQTTDIAPGYDHFTSGIGAAMIAWYGCAMLCYVTPKEHLGLPNKEDVKQGLITYKIAAHAGDVAKGHPSAQIRDNALSKARFEFRWEDQYNLGLDPDTARAYHDESLPQESAKVAHFCSMCGPKFCSMKITQEVRDYAAAKERDELANNIDIKSDAEYQSCADSETTSERELGMAQMSAEFKAKGAELYHEAADKQRDAVLED</sequence>
<proteinExistence type="inferred from homology"/>
<dbReference type="EC" id="4.1.99.17" evidence="1"/>
<dbReference type="EMBL" id="CP000931">
    <property type="protein sequence ID" value="ABZ76465.1"/>
    <property type="molecule type" value="Genomic_DNA"/>
</dbReference>
<dbReference type="RefSeq" id="WP_012276997.1">
    <property type="nucleotide sequence ID" value="NC_010334.1"/>
</dbReference>
<dbReference type="SMR" id="B0TRP7"/>
<dbReference type="STRING" id="458817.Shal_1900"/>
<dbReference type="KEGG" id="shl:Shal_1900"/>
<dbReference type="eggNOG" id="COG0422">
    <property type="taxonomic scope" value="Bacteria"/>
</dbReference>
<dbReference type="HOGENOM" id="CLU_013181_2_1_6"/>
<dbReference type="UniPathway" id="UPA00060"/>
<dbReference type="Proteomes" id="UP000001317">
    <property type="component" value="Chromosome"/>
</dbReference>
<dbReference type="GO" id="GO:0005829">
    <property type="term" value="C:cytosol"/>
    <property type="evidence" value="ECO:0007669"/>
    <property type="project" value="TreeGrafter"/>
</dbReference>
<dbReference type="GO" id="GO:0051539">
    <property type="term" value="F:4 iron, 4 sulfur cluster binding"/>
    <property type="evidence" value="ECO:0007669"/>
    <property type="project" value="UniProtKB-KW"/>
</dbReference>
<dbReference type="GO" id="GO:0016830">
    <property type="term" value="F:carbon-carbon lyase activity"/>
    <property type="evidence" value="ECO:0007669"/>
    <property type="project" value="InterPro"/>
</dbReference>
<dbReference type="GO" id="GO:0008270">
    <property type="term" value="F:zinc ion binding"/>
    <property type="evidence" value="ECO:0007669"/>
    <property type="project" value="UniProtKB-UniRule"/>
</dbReference>
<dbReference type="GO" id="GO:0009228">
    <property type="term" value="P:thiamine biosynthetic process"/>
    <property type="evidence" value="ECO:0007669"/>
    <property type="project" value="UniProtKB-KW"/>
</dbReference>
<dbReference type="GO" id="GO:0009229">
    <property type="term" value="P:thiamine diphosphate biosynthetic process"/>
    <property type="evidence" value="ECO:0007669"/>
    <property type="project" value="UniProtKB-UniRule"/>
</dbReference>
<dbReference type="FunFam" id="3.20.20.540:FF:000001">
    <property type="entry name" value="Phosphomethylpyrimidine synthase"/>
    <property type="match status" value="1"/>
</dbReference>
<dbReference type="Gene3D" id="6.10.250.620">
    <property type="match status" value="1"/>
</dbReference>
<dbReference type="Gene3D" id="3.20.20.540">
    <property type="entry name" value="Radical SAM ThiC family, central domain"/>
    <property type="match status" value="1"/>
</dbReference>
<dbReference type="HAMAP" id="MF_00089">
    <property type="entry name" value="ThiC"/>
    <property type="match status" value="1"/>
</dbReference>
<dbReference type="InterPro" id="IPR037509">
    <property type="entry name" value="ThiC"/>
</dbReference>
<dbReference type="InterPro" id="IPR025747">
    <property type="entry name" value="ThiC-associated_dom"/>
</dbReference>
<dbReference type="InterPro" id="IPR038521">
    <property type="entry name" value="ThiC/Bza_core_dom"/>
</dbReference>
<dbReference type="InterPro" id="IPR002817">
    <property type="entry name" value="ThiC/BzaA/B"/>
</dbReference>
<dbReference type="NCBIfam" id="NF006763">
    <property type="entry name" value="PRK09284.1"/>
    <property type="match status" value="1"/>
</dbReference>
<dbReference type="NCBIfam" id="NF009895">
    <property type="entry name" value="PRK13352.1"/>
    <property type="match status" value="1"/>
</dbReference>
<dbReference type="NCBIfam" id="TIGR00190">
    <property type="entry name" value="thiC"/>
    <property type="match status" value="1"/>
</dbReference>
<dbReference type="PANTHER" id="PTHR30557:SF1">
    <property type="entry name" value="PHOSPHOMETHYLPYRIMIDINE SYNTHASE, CHLOROPLASTIC"/>
    <property type="match status" value="1"/>
</dbReference>
<dbReference type="PANTHER" id="PTHR30557">
    <property type="entry name" value="THIAMINE BIOSYNTHESIS PROTEIN THIC"/>
    <property type="match status" value="1"/>
</dbReference>
<dbReference type="Pfam" id="PF13667">
    <property type="entry name" value="ThiC-associated"/>
    <property type="match status" value="1"/>
</dbReference>
<dbReference type="Pfam" id="PF01964">
    <property type="entry name" value="ThiC_Rad_SAM"/>
    <property type="match status" value="1"/>
</dbReference>
<dbReference type="SFLD" id="SFLDF00407">
    <property type="entry name" value="phosphomethylpyrimidine_syntha"/>
    <property type="match status" value="1"/>
</dbReference>
<dbReference type="SFLD" id="SFLDG01114">
    <property type="entry name" value="phosphomethylpyrimidine_syntha"/>
    <property type="match status" value="1"/>
</dbReference>
<dbReference type="SFLD" id="SFLDS00113">
    <property type="entry name" value="Radical_SAM_Phosphomethylpyrim"/>
    <property type="match status" value="1"/>
</dbReference>
<evidence type="ECO:0000255" key="1">
    <source>
        <dbReference type="HAMAP-Rule" id="MF_00089"/>
    </source>
</evidence>
<reference key="1">
    <citation type="submission" date="2008-01" db="EMBL/GenBank/DDBJ databases">
        <title>Complete sequence of Shewanella halifaxensis HAW-EB4.</title>
        <authorList>
            <consortium name="US DOE Joint Genome Institute"/>
            <person name="Copeland A."/>
            <person name="Lucas S."/>
            <person name="Lapidus A."/>
            <person name="Glavina del Rio T."/>
            <person name="Dalin E."/>
            <person name="Tice H."/>
            <person name="Bruce D."/>
            <person name="Goodwin L."/>
            <person name="Pitluck S."/>
            <person name="Sims D."/>
            <person name="Brettin T."/>
            <person name="Detter J.C."/>
            <person name="Han C."/>
            <person name="Kuske C.R."/>
            <person name="Schmutz J."/>
            <person name="Larimer F."/>
            <person name="Land M."/>
            <person name="Hauser L."/>
            <person name="Kyrpides N."/>
            <person name="Kim E."/>
            <person name="Zhao J.-S."/>
            <person name="Richardson P."/>
        </authorList>
    </citation>
    <scope>NUCLEOTIDE SEQUENCE [LARGE SCALE GENOMIC DNA]</scope>
    <source>
        <strain>HAW-EB4</strain>
    </source>
</reference>
<organism>
    <name type="scientific">Shewanella halifaxensis (strain HAW-EB4)</name>
    <dbReference type="NCBI Taxonomy" id="458817"/>
    <lineage>
        <taxon>Bacteria</taxon>
        <taxon>Pseudomonadati</taxon>
        <taxon>Pseudomonadota</taxon>
        <taxon>Gammaproteobacteria</taxon>
        <taxon>Alteromonadales</taxon>
        <taxon>Shewanellaceae</taxon>
        <taxon>Shewanella</taxon>
    </lineage>
</organism>
<gene>
    <name evidence="1" type="primary">thiC</name>
    <name type="ordered locus">Shal_1900</name>
</gene>